<protein>
    <recommendedName>
        <fullName>Centrosomal protein kizuna</fullName>
    </recommendedName>
    <alternativeName>
        <fullName>Polo-like kinase 1 substrate 1</fullName>
    </alternativeName>
</protein>
<dbReference type="EMBL" id="BC141787">
    <property type="protein sequence ID" value="AAI41788.1"/>
    <property type="molecule type" value="mRNA"/>
</dbReference>
<dbReference type="RefSeq" id="NP_001091860.1">
    <property type="nucleotide sequence ID" value="NM_001098390.1"/>
</dbReference>
<dbReference type="SMR" id="A5D8S0"/>
<dbReference type="FunCoup" id="A5D8S0">
    <property type="interactions" value="1591"/>
</dbReference>
<dbReference type="STRING" id="7955.ENSDARP00000102994"/>
<dbReference type="PaxDb" id="7955-ENSDARP00000102994"/>
<dbReference type="GeneID" id="567100"/>
<dbReference type="KEGG" id="dre:567100"/>
<dbReference type="AGR" id="ZFIN:ZDB-GENE-070615-4"/>
<dbReference type="CTD" id="55857"/>
<dbReference type="ZFIN" id="ZDB-GENE-070615-4">
    <property type="gene designation" value="kiz"/>
</dbReference>
<dbReference type="eggNOG" id="ENOG502R72X">
    <property type="taxonomic scope" value="Eukaryota"/>
</dbReference>
<dbReference type="InParanoid" id="A5D8S0"/>
<dbReference type="OrthoDB" id="8015657at2759"/>
<dbReference type="PhylomeDB" id="A5D8S0"/>
<dbReference type="PRO" id="PR:A5D8S0"/>
<dbReference type="Proteomes" id="UP000000437">
    <property type="component" value="Chromosome 17"/>
</dbReference>
<dbReference type="GO" id="GO:0042995">
    <property type="term" value="C:cell projection"/>
    <property type="evidence" value="ECO:0007669"/>
    <property type="project" value="UniProtKB-KW"/>
</dbReference>
<dbReference type="GO" id="GO:0005813">
    <property type="term" value="C:centrosome"/>
    <property type="evidence" value="ECO:0000250"/>
    <property type="project" value="UniProtKB"/>
</dbReference>
<dbReference type="GO" id="GO:0005737">
    <property type="term" value="C:cytoplasm"/>
    <property type="evidence" value="ECO:0007669"/>
    <property type="project" value="UniProtKB-KW"/>
</dbReference>
<dbReference type="GO" id="GO:0007051">
    <property type="term" value="P:spindle organization"/>
    <property type="evidence" value="ECO:0000250"/>
    <property type="project" value="UniProtKB"/>
</dbReference>
<dbReference type="InterPro" id="IPR026742">
    <property type="entry name" value="Centrosomal_kizuma"/>
</dbReference>
<dbReference type="PANTHER" id="PTHR16299">
    <property type="entry name" value="CENTROSOMAL PROTEIN KIZUNA"/>
    <property type="match status" value="1"/>
</dbReference>
<dbReference type="PANTHER" id="PTHR16299:SF2">
    <property type="entry name" value="CENTROSOMAL PROTEIN KIZUNA"/>
    <property type="match status" value="1"/>
</dbReference>
<keyword id="KW-0966">Cell projection</keyword>
<keyword id="KW-0175">Coiled coil</keyword>
<keyword id="KW-0963">Cytoplasm</keyword>
<keyword id="KW-0206">Cytoskeleton</keyword>
<keyword id="KW-1185">Reference proteome</keyword>
<feature type="chain" id="PRO_0000381815" description="Centrosomal protein kizuna">
    <location>
        <begin position="1"/>
        <end position="706"/>
    </location>
</feature>
<feature type="region of interest" description="Disordered" evidence="3">
    <location>
        <begin position="105"/>
        <end position="184"/>
    </location>
</feature>
<feature type="region of interest" description="Disordered" evidence="3">
    <location>
        <begin position="215"/>
        <end position="347"/>
    </location>
</feature>
<feature type="region of interest" description="Disordered" evidence="3">
    <location>
        <begin position="571"/>
        <end position="603"/>
    </location>
</feature>
<feature type="region of interest" description="Disordered" evidence="3">
    <location>
        <begin position="620"/>
        <end position="665"/>
    </location>
</feature>
<feature type="region of interest" description="Disordered" evidence="3">
    <location>
        <begin position="677"/>
        <end position="706"/>
    </location>
</feature>
<feature type="coiled-coil region" evidence="2">
    <location>
        <begin position="63"/>
        <end position="113"/>
    </location>
</feature>
<feature type="compositionally biased region" description="Basic residues" evidence="3">
    <location>
        <begin position="105"/>
        <end position="116"/>
    </location>
</feature>
<feature type="compositionally biased region" description="Basic and acidic residues" evidence="3">
    <location>
        <begin position="118"/>
        <end position="127"/>
    </location>
</feature>
<feature type="compositionally biased region" description="Polar residues" evidence="3">
    <location>
        <begin position="128"/>
        <end position="156"/>
    </location>
</feature>
<feature type="compositionally biased region" description="Polar residues" evidence="3">
    <location>
        <begin position="164"/>
        <end position="180"/>
    </location>
</feature>
<feature type="compositionally biased region" description="Basic and acidic residues" evidence="3">
    <location>
        <begin position="215"/>
        <end position="251"/>
    </location>
</feature>
<feature type="compositionally biased region" description="Low complexity" evidence="3">
    <location>
        <begin position="272"/>
        <end position="283"/>
    </location>
</feature>
<feature type="compositionally biased region" description="Acidic residues" evidence="3">
    <location>
        <begin position="293"/>
        <end position="304"/>
    </location>
</feature>
<feature type="compositionally biased region" description="Polar residues" evidence="3">
    <location>
        <begin position="308"/>
        <end position="320"/>
    </location>
</feature>
<feature type="compositionally biased region" description="Acidic residues" evidence="3">
    <location>
        <begin position="586"/>
        <end position="598"/>
    </location>
</feature>
<feature type="compositionally biased region" description="Basic and acidic residues" evidence="3">
    <location>
        <begin position="638"/>
        <end position="648"/>
    </location>
</feature>
<organism>
    <name type="scientific">Danio rerio</name>
    <name type="common">Zebrafish</name>
    <name type="synonym">Brachydanio rerio</name>
    <dbReference type="NCBI Taxonomy" id="7955"/>
    <lineage>
        <taxon>Eukaryota</taxon>
        <taxon>Metazoa</taxon>
        <taxon>Chordata</taxon>
        <taxon>Craniata</taxon>
        <taxon>Vertebrata</taxon>
        <taxon>Euteleostomi</taxon>
        <taxon>Actinopterygii</taxon>
        <taxon>Neopterygii</taxon>
        <taxon>Teleostei</taxon>
        <taxon>Ostariophysi</taxon>
        <taxon>Cypriniformes</taxon>
        <taxon>Danionidae</taxon>
        <taxon>Danioninae</taxon>
        <taxon>Danio</taxon>
    </lineage>
</organism>
<gene>
    <name type="primary">kiz</name>
    <name type="synonym">plk1s1</name>
    <name type="ORF">zgc:162576</name>
</gene>
<accession>A5D8S0</accession>
<evidence type="ECO:0000250" key="1">
    <source>
        <dbReference type="UniProtKB" id="Q2M2Z5"/>
    </source>
</evidence>
<evidence type="ECO:0000255" key="2"/>
<evidence type="ECO:0000256" key="3">
    <source>
        <dbReference type="SAM" id="MobiDB-lite"/>
    </source>
</evidence>
<evidence type="ECO:0000305" key="4"/>
<sequence>MAFCNTEYFDQIGNIQKIIHERERRRHELEETLFSYLRSDERLTRLKCAKMRCYAKELHEREQRAKTRNLELLGNVENLASKLKEFSIDCSRLLQKRMEYKNHITRLKKDRRKMGSRGKSEADEHPSRLSTQGLSQSAAIFMGHQTSNGSSRNDGATTKRLPSHTEQIPNHPSLPPSQSGLCMHSHVSKASGAGILSDDILNSGDFLEGRRLSDVREKQMESDWDISQRAREQQRQEELKSPHTTLKEAEVSSRSVTVNKPADIVSLEHCPTRSPSPDTTDPSDASHYMNSGGEDEEESAEDKDDSAPINQNHSDYTSNILKPDTSMHSDSDDSASQSQSGHHASRGNALIQEQSIKAMQTHCGSKHKKVSTWQSGQHHFSESPNRLSMKGFCHLLKCIEQRLETEDVVNLYRISVNEQNLSDDIISICSQRGRLDDIDLHACGAVVLQQLSMLSCSLPHGCLLPSDLINSHWSTTSKPQQIRLCLSAESAVLWDCCFTHMVQLQKQKLLSTDHIIQLFTPLLLPADATYTDKAGKLLKRLLTYKSETHYPSKSESSSSSSLPSLLNDSVEIKPARPSGTNAQTGEEQEIQSAEEDSADQSPVESIPIRETKAYQLLKQSVAQERHWSDSEEEVSEPPDAHKLEKPEVQQDILTQNNRKSVKTKPFSAVQSKAFWGESDDSNSEIEMALRPQSCNTSSHDFDDFYD</sequence>
<reference key="1">
    <citation type="submission" date="2007-05" db="EMBL/GenBank/DDBJ databases">
        <authorList>
            <consortium name="NIH - Zebrafish Gene Collection (ZGC) project"/>
        </authorList>
    </citation>
    <scope>NUCLEOTIDE SEQUENCE [LARGE SCALE MRNA]</scope>
    <source>
        <tissue>Embryo</tissue>
    </source>
</reference>
<proteinExistence type="evidence at transcript level"/>
<name>KIZ_DANRE</name>
<comment type="function">
    <text evidence="1">Centrosomal protein required for establishing a robust mitotic centrosome architecture that can endure the forces that converge on the centrosomes during spindle formation. Required for stabilizing the expanded pericentriolar material around the centriole.</text>
</comment>
<comment type="subcellular location">
    <subcellularLocation>
        <location evidence="1">Cytoplasm</location>
        <location evidence="1">Cytoskeleton</location>
        <location evidence="1">Microtubule organizing center</location>
        <location evidence="1">Centrosome</location>
    </subcellularLocation>
    <subcellularLocation>
        <location evidence="1">Cytoplasm</location>
        <location evidence="1">Cytoskeleton</location>
        <location evidence="1">Cilium basal body</location>
    </subcellularLocation>
</comment>
<comment type="similarity">
    <text evidence="4">Belongs to the kizuna family.</text>
</comment>